<organism>
    <name type="scientific">Oryza sativa subsp. indica</name>
    <name type="common">Rice</name>
    <dbReference type="NCBI Taxonomy" id="39946"/>
    <lineage>
        <taxon>Eukaryota</taxon>
        <taxon>Viridiplantae</taxon>
        <taxon>Streptophyta</taxon>
        <taxon>Embryophyta</taxon>
        <taxon>Tracheophyta</taxon>
        <taxon>Spermatophyta</taxon>
        <taxon>Magnoliopsida</taxon>
        <taxon>Liliopsida</taxon>
        <taxon>Poales</taxon>
        <taxon>Poaceae</taxon>
        <taxon>BOP clade</taxon>
        <taxon>Oryzoideae</taxon>
        <taxon>Oryzeae</taxon>
        <taxon>Oryzinae</taxon>
        <taxon>Oryza</taxon>
        <taxon>Oryza sativa</taxon>
    </lineage>
</organism>
<dbReference type="EMBL" id="CM000126">
    <property type="protein sequence ID" value="EAY73501.1"/>
    <property type="molecule type" value="Genomic_DNA"/>
</dbReference>
<dbReference type="SMR" id="A2WNF5"/>
<dbReference type="STRING" id="39946.A2WNF5"/>
<dbReference type="EnsemblPlants" id="BGIOSGA001897-TA">
    <property type="protein sequence ID" value="BGIOSGA001897-PA"/>
    <property type="gene ID" value="BGIOSGA001897"/>
</dbReference>
<dbReference type="Gramene" id="BGIOSGA001897-TA">
    <property type="protein sequence ID" value="BGIOSGA001897-PA"/>
    <property type="gene ID" value="BGIOSGA001897"/>
</dbReference>
<dbReference type="HOGENOM" id="CLU_016834_3_0_1"/>
<dbReference type="OMA" id="YENGQHC"/>
<dbReference type="UniPathway" id="UPA00957"/>
<dbReference type="Proteomes" id="UP000007015">
    <property type="component" value="Chromosome 1"/>
</dbReference>
<dbReference type="GO" id="GO:0017177">
    <property type="term" value="C:glucosidase II complex"/>
    <property type="evidence" value="ECO:0007669"/>
    <property type="project" value="TreeGrafter"/>
</dbReference>
<dbReference type="GO" id="GO:0042742">
    <property type="term" value="P:defense response to bacterium"/>
    <property type="evidence" value="ECO:0007669"/>
    <property type="project" value="EnsemblPlants"/>
</dbReference>
<dbReference type="GO" id="GO:0006491">
    <property type="term" value="P:N-glycan processing"/>
    <property type="evidence" value="ECO:0007669"/>
    <property type="project" value="TreeGrafter"/>
</dbReference>
<dbReference type="Gene3D" id="2.70.130.10">
    <property type="entry name" value="Mannose-6-phosphate receptor binding domain"/>
    <property type="match status" value="1"/>
</dbReference>
<dbReference type="InterPro" id="IPR039794">
    <property type="entry name" value="Gtb1-like"/>
</dbReference>
<dbReference type="InterPro" id="IPR009011">
    <property type="entry name" value="Man6P_isomerase_rcpt-bd_dom_sf"/>
</dbReference>
<dbReference type="InterPro" id="IPR044865">
    <property type="entry name" value="MRH_dom"/>
</dbReference>
<dbReference type="InterPro" id="IPR036607">
    <property type="entry name" value="PRKCSH"/>
</dbReference>
<dbReference type="InterPro" id="IPR028146">
    <property type="entry name" value="PRKCSH_N"/>
</dbReference>
<dbReference type="PANTHER" id="PTHR12630:SF1">
    <property type="entry name" value="GLUCOSIDASE 2 SUBUNIT BETA"/>
    <property type="match status" value="1"/>
</dbReference>
<dbReference type="PANTHER" id="PTHR12630">
    <property type="entry name" value="N-LINKED OLIGOSACCHARIDE PROCESSING"/>
    <property type="match status" value="1"/>
</dbReference>
<dbReference type="Pfam" id="PF12999">
    <property type="entry name" value="PRKCSH-like"/>
    <property type="match status" value="1"/>
</dbReference>
<dbReference type="Pfam" id="PF13015">
    <property type="entry name" value="PRKCSH_1"/>
    <property type="match status" value="1"/>
</dbReference>
<dbReference type="SUPFAM" id="SSF50911">
    <property type="entry name" value="Mannose 6-phosphate receptor domain"/>
    <property type="match status" value="1"/>
</dbReference>
<dbReference type="PROSITE" id="PS00014">
    <property type="entry name" value="ER_TARGET"/>
    <property type="match status" value="1"/>
</dbReference>
<dbReference type="PROSITE" id="PS51914">
    <property type="entry name" value="MRH"/>
    <property type="match status" value="1"/>
</dbReference>
<feature type="signal peptide" evidence="2">
    <location>
        <begin position="1"/>
        <end position="20"/>
    </location>
</feature>
<feature type="chain" id="PRO_0000425978" description="Glucosidase 2 subunit beta">
    <location>
        <begin position="21"/>
        <end position="614"/>
    </location>
</feature>
<feature type="domain" description="MRH" evidence="3">
    <location>
        <begin position="497"/>
        <end position="592"/>
    </location>
</feature>
<feature type="region of interest" description="Disordered" evidence="5">
    <location>
        <begin position="194"/>
        <end position="396"/>
    </location>
</feature>
<feature type="compositionally biased region" description="Basic and acidic residues" evidence="5">
    <location>
        <begin position="194"/>
        <end position="222"/>
    </location>
</feature>
<feature type="compositionally biased region" description="Basic and acidic residues" evidence="5">
    <location>
        <begin position="231"/>
        <end position="272"/>
    </location>
</feature>
<feature type="compositionally biased region" description="Basic and acidic residues" evidence="5">
    <location>
        <begin position="324"/>
        <end position="351"/>
    </location>
</feature>
<feature type="compositionally biased region" description="Acidic residues" evidence="5">
    <location>
        <begin position="352"/>
        <end position="364"/>
    </location>
</feature>
<feature type="compositionally biased region" description="Basic and acidic residues" evidence="5">
    <location>
        <begin position="372"/>
        <end position="382"/>
    </location>
</feature>
<feature type="compositionally biased region" description="Acidic residues" evidence="5">
    <location>
        <begin position="383"/>
        <end position="396"/>
    </location>
</feature>
<feature type="glycosylation site" description="N-linked (GlcNAc...) asparagine" evidence="2">
    <location>
        <position position="115"/>
    </location>
</feature>
<feature type="disulfide bond" evidence="3">
    <location>
        <begin position="499"/>
        <end position="512"/>
    </location>
</feature>
<feature type="disulfide bond" evidence="3">
    <location>
        <begin position="549"/>
        <end position="578"/>
    </location>
</feature>
<feature type="disulfide bond" evidence="3">
    <location>
        <begin position="563"/>
        <end position="590"/>
    </location>
</feature>
<proteinExistence type="inferred from homology"/>
<name>GLU2B_ORYSI</name>
<protein>
    <recommendedName>
        <fullName>Glucosidase 2 subunit beta</fullName>
    </recommendedName>
    <alternativeName>
        <fullName>Glucosidase II subunit beta</fullName>
    </alternativeName>
</protein>
<accession>A2WNF5</accession>
<comment type="function">
    <text evidence="1">Regulatory subunit of glucosidase II. May be required for defense response elicited by pathogen-associated molecular patterns (PAMPs) (By similarity).</text>
</comment>
<comment type="pathway">
    <text>Glycan metabolism; N-glycan metabolism.</text>
</comment>
<comment type="subunit">
    <text evidence="1">Heterodimer of a catalytic alpha subunit and a beta subunit.</text>
</comment>
<comment type="subcellular location">
    <subcellularLocation>
        <location evidence="4">Endoplasmic reticulum</location>
    </subcellularLocation>
</comment>
<keyword id="KW-1015">Disulfide bond</keyword>
<keyword id="KW-0256">Endoplasmic reticulum</keyword>
<keyword id="KW-0325">Glycoprotein</keyword>
<keyword id="KW-0611">Plant defense</keyword>
<keyword id="KW-1185">Reference proteome</keyword>
<keyword id="KW-0732">Signal</keyword>
<evidence type="ECO:0000250" key="1"/>
<evidence type="ECO:0000255" key="2"/>
<evidence type="ECO:0000255" key="3">
    <source>
        <dbReference type="PROSITE-ProRule" id="PRU01262"/>
    </source>
</evidence>
<evidence type="ECO:0000255" key="4">
    <source>
        <dbReference type="PROSITE-ProRule" id="PRU10138"/>
    </source>
</evidence>
<evidence type="ECO:0000256" key="5">
    <source>
        <dbReference type="SAM" id="MobiDB-lite"/>
    </source>
</evidence>
<reference key="1">
    <citation type="journal article" date="2005" name="PLoS Biol.">
        <title>The genomes of Oryza sativa: a history of duplications.</title>
        <authorList>
            <person name="Yu J."/>
            <person name="Wang J."/>
            <person name="Lin W."/>
            <person name="Li S."/>
            <person name="Li H."/>
            <person name="Zhou J."/>
            <person name="Ni P."/>
            <person name="Dong W."/>
            <person name="Hu S."/>
            <person name="Zeng C."/>
            <person name="Zhang J."/>
            <person name="Zhang Y."/>
            <person name="Li R."/>
            <person name="Xu Z."/>
            <person name="Li S."/>
            <person name="Li X."/>
            <person name="Zheng H."/>
            <person name="Cong L."/>
            <person name="Lin L."/>
            <person name="Yin J."/>
            <person name="Geng J."/>
            <person name="Li G."/>
            <person name="Shi J."/>
            <person name="Liu J."/>
            <person name="Lv H."/>
            <person name="Li J."/>
            <person name="Wang J."/>
            <person name="Deng Y."/>
            <person name="Ran L."/>
            <person name="Shi X."/>
            <person name="Wang X."/>
            <person name="Wu Q."/>
            <person name="Li C."/>
            <person name="Ren X."/>
            <person name="Wang J."/>
            <person name="Wang X."/>
            <person name="Li D."/>
            <person name="Liu D."/>
            <person name="Zhang X."/>
            <person name="Ji Z."/>
            <person name="Zhao W."/>
            <person name="Sun Y."/>
            <person name="Zhang Z."/>
            <person name="Bao J."/>
            <person name="Han Y."/>
            <person name="Dong L."/>
            <person name="Ji J."/>
            <person name="Chen P."/>
            <person name="Wu S."/>
            <person name="Liu J."/>
            <person name="Xiao Y."/>
            <person name="Bu D."/>
            <person name="Tan J."/>
            <person name="Yang L."/>
            <person name="Ye C."/>
            <person name="Zhang J."/>
            <person name="Xu J."/>
            <person name="Zhou Y."/>
            <person name="Yu Y."/>
            <person name="Zhang B."/>
            <person name="Zhuang S."/>
            <person name="Wei H."/>
            <person name="Liu B."/>
            <person name="Lei M."/>
            <person name="Yu H."/>
            <person name="Li Y."/>
            <person name="Xu H."/>
            <person name="Wei S."/>
            <person name="He X."/>
            <person name="Fang L."/>
            <person name="Zhang Z."/>
            <person name="Zhang Y."/>
            <person name="Huang X."/>
            <person name="Su Z."/>
            <person name="Tong W."/>
            <person name="Li J."/>
            <person name="Tong Z."/>
            <person name="Li S."/>
            <person name="Ye J."/>
            <person name="Wang L."/>
            <person name="Fang L."/>
            <person name="Lei T."/>
            <person name="Chen C.-S."/>
            <person name="Chen H.-C."/>
            <person name="Xu Z."/>
            <person name="Li H."/>
            <person name="Huang H."/>
            <person name="Zhang F."/>
            <person name="Xu H."/>
            <person name="Li N."/>
            <person name="Zhao C."/>
            <person name="Li S."/>
            <person name="Dong L."/>
            <person name="Huang Y."/>
            <person name="Li L."/>
            <person name="Xi Y."/>
            <person name="Qi Q."/>
            <person name="Li W."/>
            <person name="Zhang B."/>
            <person name="Hu W."/>
            <person name="Zhang Y."/>
            <person name="Tian X."/>
            <person name="Jiao Y."/>
            <person name="Liang X."/>
            <person name="Jin J."/>
            <person name="Gao L."/>
            <person name="Zheng W."/>
            <person name="Hao B."/>
            <person name="Liu S.-M."/>
            <person name="Wang W."/>
            <person name="Yuan L."/>
            <person name="Cao M."/>
            <person name="McDermott J."/>
            <person name="Samudrala R."/>
            <person name="Wang J."/>
            <person name="Wong G.K.-S."/>
            <person name="Yang H."/>
        </authorList>
    </citation>
    <scope>NUCLEOTIDE SEQUENCE [LARGE SCALE GENOMIC DNA]</scope>
    <source>
        <strain>cv. 93-11</strain>
    </source>
</reference>
<sequence>MGLHTLLLLLLLRISASAAASRPPLDTLGIPPQDEAYFRGGVIRCRDGSGRFARDKLNDDFCDCPDGTDEPGTSACPEGKFYCQNAGHSPITIFSSRVNDGICDCCDGSDEYDSNVTCKNTCWEAGKAARDKLKKKVATYKSGVVIRNQEIQKAKVAFAKDEAELAKLKGEEKILQGLVDKLTEQKKLIEKAEEEERLRKEKEEKRMKEEAEKQAADEKKASDASQEVDSQENHETVQEDESKVAEHHDGHATSHDNHTPESESSVEQHDPESQDDISIKAAPADESPPEETSAAPTKEQESTPADSEGLSREELGRLVASRWTGEKVDEVSKDDKNEHEAEHDMPEHSEETHEDESDVPESAEDSYAGYHSEVEDDRHKYDDEDFSHESDDEYVDDHDEHVASYKSDDDQKGDDHSDFTASGQASWLDKIQQTVQNVLRTFNFFKTPVDLSEASRVRKEYDDASSKLSKIQSRISTLTDKLKHDFGKEKEFYYFYDQCFESKEGKYVYKVCPFKKASQVEGHSTTSLGRWDKFEESYRVMQFSNGDRCWNGPDRSLKVRLRCGLNNELNGVDEPSRCEYVAVLSTPALCDEQKLKELEQKLEASSNQRDHDEL</sequence>
<gene>
    <name type="ORF">OsI_01383</name>
</gene>